<reference key="1">
    <citation type="journal article" date="1998" name="Nature">
        <title>The genome sequence of Rickettsia prowazekii and the origin of mitochondria.</title>
        <authorList>
            <person name="Andersson S.G.E."/>
            <person name="Zomorodipour A."/>
            <person name="Andersson J.O."/>
            <person name="Sicheritz-Ponten T."/>
            <person name="Alsmark U.C.M."/>
            <person name="Podowski R.M."/>
            <person name="Naeslund A.K."/>
            <person name="Eriksson A.-S."/>
            <person name="Winkler H.H."/>
            <person name="Kurland C.G."/>
        </authorList>
    </citation>
    <scope>NUCLEOTIDE SEQUENCE [LARGE SCALE GENOMIC DNA]</scope>
    <source>
        <strain>Madrid E</strain>
    </source>
</reference>
<sequence length="888" mass="99495">MKILKSLVLLVLFIVMPAKAHDAFSWMSTSFSGLKGLFGCLEVPEFTSFQESNIGINLSKAGAWQSTGHTVEKGKLLKINWSIAGVTTEPRKYLVLYRIDPRFSTPQVFIKTYNYSKLQFEALGFPRFVTNSNSSIPGAIPPDKDLDALSFTKMSDSIKYFNYSKNNVKIEVKAGDVVNISLVGKDNFFTSNTLDNILTEELDSSIFAPSALYTQSNLGNFDNRIIYASAKEVCDIIDAARDPDKPSGCSGTGAATKYKSINSNEALVGKPMMIGAIHNFMGLINSCPEHSGINTRPACYYDQGRGMIIKVGGQVIKERDQSFVKSGRNSFIYYQATRDGIMNFTSDWQVSNMFNNSVLMSDWIRRFLNYPSFIDYINQNDWSANFLYFGRYSMIVEIGNGANSISADVQQNISLEYLITYDGTLPDPSIRGTPVDYNFAADAPKDGYLWLRVVNPNSNIQGVVSVNYANYTGTTWFSDIVYNGAIKPITDQFRTFSKNFYIKLIKNSAVQNIVKAALTLYVIIFGLMFVAGALKLTAIEVITRICKIAIVAFLIREESWNFFNTYFFSVFTDGINFFITNVVGATSSRSNIFGFIDPIFDKYTNGRIWGLLFIELLQIHNGLAFIAIITIYSLITYFRAILEVIIGYVIAFIGITVMISLAPFFIILMLFEKTKSLFDNWISTLLSYVVQPTILLIFFLLIDQVLSEQLLKVVVRACWDTLIPIKIGLDLTNLGIPINFSFTLPFLPGIPFYVPDVPEISRSNIFTNNANTFLVLFTTSLLFYSYCLMSYGLVTFVNIVVGMLTNVTPARISGNYQARSDPVGAVMQDIGSVTTPMKNASMVPARVFKDKIIDQNYKARKSEGGVEFTNKFFSERNDITKKEEGARE</sequence>
<proteinExistence type="inferred from homology"/>
<comment type="subcellular location">
    <subcellularLocation>
        <location evidence="2">Cell membrane</location>
        <topology evidence="2">Multi-pass membrane protein</topology>
    </subcellularLocation>
</comment>
<comment type="similarity">
    <text evidence="2">Belongs to the TrbL/VirB6 family.</text>
</comment>
<protein>
    <recommendedName>
        <fullName>Uncharacterized protein RP107</fullName>
    </recommendedName>
</protein>
<name>Y107_RICPR</name>
<organism>
    <name type="scientific">Rickettsia prowazekii (strain Madrid E)</name>
    <dbReference type="NCBI Taxonomy" id="272947"/>
    <lineage>
        <taxon>Bacteria</taxon>
        <taxon>Pseudomonadati</taxon>
        <taxon>Pseudomonadota</taxon>
        <taxon>Alphaproteobacteria</taxon>
        <taxon>Rickettsiales</taxon>
        <taxon>Rickettsiaceae</taxon>
        <taxon>Rickettsieae</taxon>
        <taxon>Rickettsia</taxon>
        <taxon>typhus group</taxon>
    </lineage>
</organism>
<feature type="signal peptide" evidence="1">
    <location>
        <begin position="1"/>
        <end position="20"/>
    </location>
</feature>
<feature type="chain" id="PRO_0000269225" description="Uncharacterized protein RP107">
    <location>
        <begin position="21"/>
        <end position="888"/>
    </location>
</feature>
<feature type="transmembrane region" description="Helical" evidence="1">
    <location>
        <begin position="513"/>
        <end position="533"/>
    </location>
</feature>
<feature type="transmembrane region" description="Helical" evidence="1">
    <location>
        <begin position="565"/>
        <end position="585"/>
    </location>
</feature>
<feature type="transmembrane region" description="Helical" evidence="1">
    <location>
        <begin position="611"/>
        <end position="631"/>
    </location>
</feature>
<feature type="transmembrane region" description="Helical" evidence="1">
    <location>
        <begin position="649"/>
        <end position="669"/>
    </location>
</feature>
<feature type="transmembrane region" description="Helical" evidence="1">
    <location>
        <begin position="682"/>
        <end position="702"/>
    </location>
</feature>
<feature type="transmembrane region" description="Helical" evidence="1">
    <location>
        <begin position="781"/>
        <end position="801"/>
    </location>
</feature>
<gene>
    <name type="ordered locus">RP107</name>
</gene>
<keyword id="KW-1003">Cell membrane</keyword>
<keyword id="KW-0472">Membrane</keyword>
<keyword id="KW-1185">Reference proteome</keyword>
<keyword id="KW-0732">Signal</keyword>
<keyword id="KW-0812">Transmembrane</keyword>
<keyword id="KW-1133">Transmembrane helix</keyword>
<accession>Q9ZE41</accession>
<evidence type="ECO:0000255" key="1"/>
<evidence type="ECO:0000305" key="2"/>
<dbReference type="EMBL" id="AJ235270">
    <property type="protein sequence ID" value="CAA14576.1"/>
    <property type="molecule type" value="Genomic_DNA"/>
</dbReference>
<dbReference type="PIR" id="A71720">
    <property type="entry name" value="A71720"/>
</dbReference>
<dbReference type="RefSeq" id="NP_220499.1">
    <property type="nucleotide sequence ID" value="NC_000963.1"/>
</dbReference>
<dbReference type="RefSeq" id="WP_010886213.1">
    <property type="nucleotide sequence ID" value="NC_000963.1"/>
</dbReference>
<dbReference type="STRING" id="272947.gene:17555190"/>
<dbReference type="EnsemblBacteria" id="CAA14576">
    <property type="protein sequence ID" value="CAA14576"/>
    <property type="gene ID" value="CAA14576"/>
</dbReference>
<dbReference type="KEGG" id="rpr:RP107"/>
<dbReference type="PATRIC" id="fig|272947.5.peg.109"/>
<dbReference type="eggNOG" id="COG3704">
    <property type="taxonomic scope" value="Bacteria"/>
</dbReference>
<dbReference type="HOGENOM" id="CLU_327573_0_0_5"/>
<dbReference type="OrthoDB" id="7164976at2"/>
<dbReference type="Proteomes" id="UP000002480">
    <property type="component" value="Chromosome"/>
</dbReference>
<dbReference type="GO" id="GO:0005886">
    <property type="term" value="C:plasma membrane"/>
    <property type="evidence" value="ECO:0007669"/>
    <property type="project" value="UniProtKB-SubCell"/>
</dbReference>
<dbReference type="GO" id="GO:0030255">
    <property type="term" value="P:protein secretion by the type IV secretion system"/>
    <property type="evidence" value="ECO:0007669"/>
    <property type="project" value="InterPro"/>
</dbReference>
<dbReference type="InterPro" id="IPR007688">
    <property type="entry name" value="Conjugal_tfr_TrbL/VirB6"/>
</dbReference>
<dbReference type="Pfam" id="PF04610">
    <property type="entry name" value="TrbL"/>
    <property type="match status" value="1"/>
</dbReference>